<evidence type="ECO:0000255" key="1">
    <source>
        <dbReference type="HAMAP-Rule" id="MF_03061"/>
    </source>
</evidence>
<evidence type="ECO:0000269" key="2">
    <source>
    </source>
</evidence>
<evidence type="ECO:0000303" key="3">
    <source>
    </source>
</evidence>
<evidence type="ECO:0000305" key="4"/>
<evidence type="ECO:0000312" key="5">
    <source>
        <dbReference type="FlyBase" id="FBgn0263133"/>
    </source>
</evidence>
<reference key="1">
    <citation type="journal article" date="2011" name="PLoS ONE">
        <title>The Drosophila mitochondrial translation elongation factor G1 contains a nuclear localization signal and inhibits growth and DPP signaling.</title>
        <authorList>
            <person name="Trivigno C."/>
            <person name="Haerry T.E."/>
        </authorList>
    </citation>
    <scope>NUCLEOTIDE SEQUENCE [MRNA]</scope>
    <scope>FUNCTION</scope>
    <scope>SUBCELLULAR LOCATION</scope>
    <scope>DISRUPTION PHENOTYPE</scope>
    <source>
        <tissue>Embryo</tissue>
    </source>
</reference>
<reference key="2">
    <citation type="journal article" date="2000" name="Science">
        <title>The genome sequence of Drosophila melanogaster.</title>
        <authorList>
            <person name="Adams M.D."/>
            <person name="Celniker S.E."/>
            <person name="Holt R.A."/>
            <person name="Evans C.A."/>
            <person name="Gocayne J.D."/>
            <person name="Amanatides P.G."/>
            <person name="Scherer S.E."/>
            <person name="Li P.W."/>
            <person name="Hoskins R.A."/>
            <person name="Galle R.F."/>
            <person name="George R.A."/>
            <person name="Lewis S.E."/>
            <person name="Richards S."/>
            <person name="Ashburner M."/>
            <person name="Henderson S.N."/>
            <person name="Sutton G.G."/>
            <person name="Wortman J.R."/>
            <person name="Yandell M.D."/>
            <person name="Zhang Q."/>
            <person name="Chen L.X."/>
            <person name="Brandon R.C."/>
            <person name="Rogers Y.-H.C."/>
            <person name="Blazej R.G."/>
            <person name="Champe M."/>
            <person name="Pfeiffer B.D."/>
            <person name="Wan K.H."/>
            <person name="Doyle C."/>
            <person name="Baxter E.G."/>
            <person name="Helt G."/>
            <person name="Nelson C.R."/>
            <person name="Miklos G.L.G."/>
            <person name="Abril J.F."/>
            <person name="Agbayani A."/>
            <person name="An H.-J."/>
            <person name="Andrews-Pfannkoch C."/>
            <person name="Baldwin D."/>
            <person name="Ballew R.M."/>
            <person name="Basu A."/>
            <person name="Baxendale J."/>
            <person name="Bayraktaroglu L."/>
            <person name="Beasley E.M."/>
            <person name="Beeson K.Y."/>
            <person name="Benos P.V."/>
            <person name="Berman B.P."/>
            <person name="Bhandari D."/>
            <person name="Bolshakov S."/>
            <person name="Borkova D."/>
            <person name="Botchan M.R."/>
            <person name="Bouck J."/>
            <person name="Brokstein P."/>
            <person name="Brottier P."/>
            <person name="Burtis K.C."/>
            <person name="Busam D.A."/>
            <person name="Butler H."/>
            <person name="Cadieu E."/>
            <person name="Center A."/>
            <person name="Chandra I."/>
            <person name="Cherry J.M."/>
            <person name="Cawley S."/>
            <person name="Dahlke C."/>
            <person name="Davenport L.B."/>
            <person name="Davies P."/>
            <person name="de Pablos B."/>
            <person name="Delcher A."/>
            <person name="Deng Z."/>
            <person name="Mays A.D."/>
            <person name="Dew I."/>
            <person name="Dietz S.M."/>
            <person name="Dodson K."/>
            <person name="Doup L.E."/>
            <person name="Downes M."/>
            <person name="Dugan-Rocha S."/>
            <person name="Dunkov B.C."/>
            <person name="Dunn P."/>
            <person name="Durbin K.J."/>
            <person name="Evangelista C.C."/>
            <person name="Ferraz C."/>
            <person name="Ferriera S."/>
            <person name="Fleischmann W."/>
            <person name="Fosler C."/>
            <person name="Gabrielian A.E."/>
            <person name="Garg N.S."/>
            <person name="Gelbart W.M."/>
            <person name="Glasser K."/>
            <person name="Glodek A."/>
            <person name="Gong F."/>
            <person name="Gorrell J.H."/>
            <person name="Gu Z."/>
            <person name="Guan P."/>
            <person name="Harris M."/>
            <person name="Harris N.L."/>
            <person name="Harvey D.A."/>
            <person name="Heiman T.J."/>
            <person name="Hernandez J.R."/>
            <person name="Houck J."/>
            <person name="Hostin D."/>
            <person name="Houston K.A."/>
            <person name="Howland T.J."/>
            <person name="Wei M.-H."/>
            <person name="Ibegwam C."/>
            <person name="Jalali M."/>
            <person name="Kalush F."/>
            <person name="Karpen G.H."/>
            <person name="Ke Z."/>
            <person name="Kennison J.A."/>
            <person name="Ketchum K.A."/>
            <person name="Kimmel B.E."/>
            <person name="Kodira C.D."/>
            <person name="Kraft C.L."/>
            <person name="Kravitz S."/>
            <person name="Kulp D."/>
            <person name="Lai Z."/>
            <person name="Lasko P."/>
            <person name="Lei Y."/>
            <person name="Levitsky A.A."/>
            <person name="Li J.H."/>
            <person name="Li Z."/>
            <person name="Liang Y."/>
            <person name="Lin X."/>
            <person name="Liu X."/>
            <person name="Mattei B."/>
            <person name="McIntosh T.C."/>
            <person name="McLeod M.P."/>
            <person name="McPherson D."/>
            <person name="Merkulov G."/>
            <person name="Milshina N.V."/>
            <person name="Mobarry C."/>
            <person name="Morris J."/>
            <person name="Moshrefi A."/>
            <person name="Mount S.M."/>
            <person name="Moy M."/>
            <person name="Murphy B."/>
            <person name="Murphy L."/>
            <person name="Muzny D.M."/>
            <person name="Nelson D.L."/>
            <person name="Nelson D.R."/>
            <person name="Nelson K.A."/>
            <person name="Nixon K."/>
            <person name="Nusskern D.R."/>
            <person name="Pacleb J.M."/>
            <person name="Palazzolo M."/>
            <person name="Pittman G.S."/>
            <person name="Pan S."/>
            <person name="Pollard J."/>
            <person name="Puri V."/>
            <person name="Reese M.G."/>
            <person name="Reinert K."/>
            <person name="Remington K."/>
            <person name="Saunders R.D.C."/>
            <person name="Scheeler F."/>
            <person name="Shen H."/>
            <person name="Shue B.C."/>
            <person name="Siden-Kiamos I."/>
            <person name="Simpson M."/>
            <person name="Skupski M.P."/>
            <person name="Smith T.J."/>
            <person name="Spier E."/>
            <person name="Spradling A.C."/>
            <person name="Stapleton M."/>
            <person name="Strong R."/>
            <person name="Sun E."/>
            <person name="Svirskas R."/>
            <person name="Tector C."/>
            <person name="Turner R."/>
            <person name="Venter E."/>
            <person name="Wang A.H."/>
            <person name="Wang X."/>
            <person name="Wang Z.-Y."/>
            <person name="Wassarman D.A."/>
            <person name="Weinstock G.M."/>
            <person name="Weissenbach J."/>
            <person name="Williams S.M."/>
            <person name="Woodage T."/>
            <person name="Worley K.C."/>
            <person name="Wu D."/>
            <person name="Yang S."/>
            <person name="Yao Q.A."/>
            <person name="Ye J."/>
            <person name="Yeh R.-F."/>
            <person name="Zaveri J.S."/>
            <person name="Zhan M."/>
            <person name="Zhang G."/>
            <person name="Zhao Q."/>
            <person name="Zheng L."/>
            <person name="Zheng X.H."/>
            <person name="Zhong F.N."/>
            <person name="Zhong W."/>
            <person name="Zhou X."/>
            <person name="Zhu S.C."/>
            <person name="Zhu X."/>
            <person name="Smith H.O."/>
            <person name="Gibbs R.A."/>
            <person name="Myers E.W."/>
            <person name="Rubin G.M."/>
            <person name="Venter J.C."/>
        </authorList>
    </citation>
    <scope>NUCLEOTIDE SEQUENCE [LARGE SCALE GENOMIC DNA]</scope>
    <source>
        <strain>Berkeley</strain>
    </source>
</reference>
<reference key="3">
    <citation type="journal article" date="2002" name="Genome Biol.">
        <title>Annotation of the Drosophila melanogaster euchromatic genome: a systematic review.</title>
        <authorList>
            <person name="Misra S."/>
            <person name="Crosby M.A."/>
            <person name="Mungall C.J."/>
            <person name="Matthews B.B."/>
            <person name="Campbell K.S."/>
            <person name="Hradecky P."/>
            <person name="Huang Y."/>
            <person name="Kaminker J.S."/>
            <person name="Millburn G.H."/>
            <person name="Prochnik S.E."/>
            <person name="Smith C.D."/>
            <person name="Tupy J.L."/>
            <person name="Whitfield E.J."/>
            <person name="Bayraktaroglu L."/>
            <person name="Berman B.P."/>
            <person name="Bettencourt B.R."/>
            <person name="Celniker S.E."/>
            <person name="de Grey A.D.N.J."/>
            <person name="Drysdale R.A."/>
            <person name="Harris N.L."/>
            <person name="Richter J."/>
            <person name="Russo S."/>
            <person name="Schroeder A.J."/>
            <person name="Shu S.Q."/>
            <person name="Stapleton M."/>
            <person name="Yamada C."/>
            <person name="Ashburner M."/>
            <person name="Gelbart W.M."/>
            <person name="Rubin G.M."/>
            <person name="Lewis S.E."/>
        </authorList>
    </citation>
    <scope>GENOME REANNOTATION</scope>
    <source>
        <strain>Berkeley</strain>
    </source>
</reference>
<reference key="4">
    <citation type="submission" date="2005-08" db="EMBL/GenBank/DDBJ databases">
        <authorList>
            <person name="Stapleton M."/>
            <person name="Carlson J."/>
            <person name="Chavez C."/>
            <person name="Frise E."/>
            <person name="George R."/>
            <person name="Pacleb J."/>
            <person name="Park S."/>
            <person name="Wan K.H."/>
            <person name="Yu C."/>
            <person name="Celniker S.E."/>
        </authorList>
    </citation>
    <scope>NUCLEOTIDE SEQUENCE [LARGE SCALE MRNA]</scope>
    <source>
        <strain>Berkeley</strain>
        <tissue>Embryo</tissue>
    </source>
</reference>
<organism>
    <name type="scientific">Drosophila melanogaster</name>
    <name type="common">Fruit fly</name>
    <dbReference type="NCBI Taxonomy" id="7227"/>
    <lineage>
        <taxon>Eukaryota</taxon>
        <taxon>Metazoa</taxon>
        <taxon>Ecdysozoa</taxon>
        <taxon>Arthropoda</taxon>
        <taxon>Hexapoda</taxon>
        <taxon>Insecta</taxon>
        <taxon>Pterygota</taxon>
        <taxon>Neoptera</taxon>
        <taxon>Endopterygota</taxon>
        <taxon>Diptera</taxon>
        <taxon>Brachycera</taxon>
        <taxon>Muscomorpha</taxon>
        <taxon>Ephydroidea</taxon>
        <taxon>Drosophilidae</taxon>
        <taxon>Drosophila</taxon>
        <taxon>Sophophora</taxon>
    </lineage>
</organism>
<accession>Q9VM33</accession>
<accession>Q494L3</accession>
<keyword id="KW-0251">Elongation factor</keyword>
<keyword id="KW-0342">GTP-binding</keyword>
<keyword id="KW-0496">Mitochondrion</keyword>
<keyword id="KW-0547">Nucleotide-binding</keyword>
<keyword id="KW-0648">Protein biosynthesis</keyword>
<keyword id="KW-1185">Reference proteome</keyword>
<feature type="chain" id="PRO_0000007445" description="Elongation factor G, mitochondrial">
    <location>
        <begin position="1"/>
        <end position="745"/>
    </location>
</feature>
<feature type="domain" description="tr-type G">
    <location>
        <begin position="40"/>
        <end position="317"/>
    </location>
</feature>
<feature type="binding site" evidence="1">
    <location>
        <begin position="49"/>
        <end position="56"/>
    </location>
    <ligand>
        <name>GTP</name>
        <dbReference type="ChEBI" id="CHEBI:37565"/>
    </ligand>
</feature>
<feature type="binding site" evidence="1">
    <location>
        <begin position="116"/>
        <end position="120"/>
    </location>
    <ligand>
        <name>GTP</name>
        <dbReference type="ChEBI" id="CHEBI:37565"/>
    </ligand>
</feature>
<feature type="binding site" evidence="1">
    <location>
        <begin position="170"/>
        <end position="173"/>
    </location>
    <ligand>
        <name>GTP</name>
        <dbReference type="ChEBI" id="CHEBI:37565"/>
    </ligand>
</feature>
<feature type="sequence conflict" description="In Ref. 4; AAZ41771." evidence="4" ref="4">
    <original>Q</original>
    <variation>E</variation>
    <location>
        <position position="150"/>
    </location>
</feature>
<dbReference type="EMBL" id="AE014134">
    <property type="protein sequence ID" value="AAF52495.2"/>
    <property type="molecule type" value="Genomic_DNA"/>
</dbReference>
<dbReference type="EMBL" id="BT023763">
    <property type="protein sequence ID" value="AAZ41771.1"/>
    <property type="status" value="ALT_FRAME"/>
    <property type="molecule type" value="mRNA"/>
</dbReference>
<dbReference type="RefSeq" id="NP_609105.1">
    <property type="nucleotide sequence ID" value="NM_135261.2"/>
</dbReference>
<dbReference type="SMR" id="Q9VM33"/>
<dbReference type="BioGRID" id="60150">
    <property type="interactions" value="1"/>
</dbReference>
<dbReference type="FunCoup" id="Q9VM33">
    <property type="interactions" value="2191"/>
</dbReference>
<dbReference type="STRING" id="7227.FBpp0079041"/>
<dbReference type="PaxDb" id="7227-FBpp0079041"/>
<dbReference type="EnsemblMetazoa" id="FBtr0079413">
    <property type="protein sequence ID" value="FBpp0079041"/>
    <property type="gene ID" value="FBgn0263133"/>
</dbReference>
<dbReference type="GeneID" id="34004"/>
<dbReference type="KEGG" id="dme:Dmel_CG4567"/>
<dbReference type="UCSC" id="CG4567-RA">
    <property type="organism name" value="d. melanogaster"/>
</dbReference>
<dbReference type="AGR" id="FB:FBgn0263133"/>
<dbReference type="CTD" id="34004"/>
<dbReference type="FlyBase" id="FBgn0263133">
    <property type="gene designation" value="mEFG1"/>
</dbReference>
<dbReference type="VEuPathDB" id="VectorBase:FBgn0263133"/>
<dbReference type="eggNOG" id="KOG0465">
    <property type="taxonomic scope" value="Eukaryota"/>
</dbReference>
<dbReference type="GeneTree" id="ENSGT00550000074911"/>
<dbReference type="HOGENOM" id="CLU_002794_4_0_1"/>
<dbReference type="InParanoid" id="Q9VM33"/>
<dbReference type="OMA" id="GQFAKVQ"/>
<dbReference type="OrthoDB" id="198619at2759"/>
<dbReference type="PhylomeDB" id="Q9VM33"/>
<dbReference type="Reactome" id="R-DME-5389840">
    <property type="pathway name" value="Mitochondrial translation elongation"/>
</dbReference>
<dbReference type="UniPathway" id="UPA00345"/>
<dbReference type="BioGRID-ORCS" id="34004">
    <property type="hits" value="1 hit in 1 CRISPR screen"/>
</dbReference>
<dbReference type="GenomeRNAi" id="34004"/>
<dbReference type="PRO" id="PR:Q9VM33"/>
<dbReference type="Proteomes" id="UP000000803">
    <property type="component" value="Chromosome 2L"/>
</dbReference>
<dbReference type="Bgee" id="FBgn0263133">
    <property type="expression patterns" value="Expressed in ovary and 64 other cell types or tissues"/>
</dbReference>
<dbReference type="GO" id="GO:0005739">
    <property type="term" value="C:mitochondrion"/>
    <property type="evidence" value="ECO:0000314"/>
    <property type="project" value="FlyBase"/>
</dbReference>
<dbReference type="GO" id="GO:0005634">
    <property type="term" value="C:nucleus"/>
    <property type="evidence" value="ECO:0000314"/>
    <property type="project" value="FlyBase"/>
</dbReference>
<dbReference type="GO" id="GO:0005525">
    <property type="term" value="F:GTP binding"/>
    <property type="evidence" value="ECO:0007669"/>
    <property type="project" value="UniProtKB-UniRule"/>
</dbReference>
<dbReference type="GO" id="GO:0003924">
    <property type="term" value="F:GTPase activity"/>
    <property type="evidence" value="ECO:0000250"/>
    <property type="project" value="UniProtKB"/>
</dbReference>
<dbReference type="GO" id="GO:0003746">
    <property type="term" value="F:translation elongation factor activity"/>
    <property type="evidence" value="ECO:0000250"/>
    <property type="project" value="UniProtKB"/>
</dbReference>
<dbReference type="GO" id="GO:0070125">
    <property type="term" value="P:mitochondrial translational elongation"/>
    <property type="evidence" value="ECO:0000250"/>
    <property type="project" value="UniProtKB"/>
</dbReference>
<dbReference type="CDD" id="cd01886">
    <property type="entry name" value="EF-G"/>
    <property type="match status" value="1"/>
</dbReference>
<dbReference type="CDD" id="cd16262">
    <property type="entry name" value="EFG_III"/>
    <property type="match status" value="1"/>
</dbReference>
<dbReference type="CDD" id="cd01434">
    <property type="entry name" value="EFG_mtEFG1_IV"/>
    <property type="match status" value="1"/>
</dbReference>
<dbReference type="CDD" id="cd04097">
    <property type="entry name" value="mtEFG1_C"/>
    <property type="match status" value="1"/>
</dbReference>
<dbReference type="CDD" id="cd04091">
    <property type="entry name" value="mtEFG1_II_like"/>
    <property type="match status" value="1"/>
</dbReference>
<dbReference type="FunFam" id="3.30.230.10:FF:000003">
    <property type="entry name" value="Elongation factor G"/>
    <property type="match status" value="1"/>
</dbReference>
<dbReference type="FunFam" id="3.30.70.240:FF:000001">
    <property type="entry name" value="Elongation factor G"/>
    <property type="match status" value="1"/>
</dbReference>
<dbReference type="FunFam" id="3.30.70.870:FF:000001">
    <property type="entry name" value="Elongation factor G"/>
    <property type="match status" value="1"/>
</dbReference>
<dbReference type="FunFam" id="2.40.30.10:FF:000022">
    <property type="entry name" value="Elongation factor G, mitochondrial"/>
    <property type="match status" value="1"/>
</dbReference>
<dbReference type="FunFam" id="3.40.50.300:FF:000539">
    <property type="entry name" value="Elongation factor G, mitochondrial"/>
    <property type="match status" value="1"/>
</dbReference>
<dbReference type="Gene3D" id="3.30.230.10">
    <property type="match status" value="1"/>
</dbReference>
<dbReference type="Gene3D" id="3.30.70.240">
    <property type="match status" value="1"/>
</dbReference>
<dbReference type="Gene3D" id="3.30.70.870">
    <property type="entry name" value="Elongation Factor G (Translational Gtpase), domain 3"/>
    <property type="match status" value="1"/>
</dbReference>
<dbReference type="Gene3D" id="3.40.50.300">
    <property type="entry name" value="P-loop containing nucleotide triphosphate hydrolases"/>
    <property type="match status" value="1"/>
</dbReference>
<dbReference type="Gene3D" id="2.40.30.10">
    <property type="entry name" value="Translation factors"/>
    <property type="match status" value="1"/>
</dbReference>
<dbReference type="HAMAP" id="MF_00054_B">
    <property type="entry name" value="EF_G_EF_2_B"/>
    <property type="match status" value="1"/>
</dbReference>
<dbReference type="InterPro" id="IPR041095">
    <property type="entry name" value="EFG_II"/>
</dbReference>
<dbReference type="InterPro" id="IPR009022">
    <property type="entry name" value="EFG_III"/>
</dbReference>
<dbReference type="InterPro" id="IPR035647">
    <property type="entry name" value="EFG_III/V"/>
</dbReference>
<dbReference type="InterPro" id="IPR047872">
    <property type="entry name" value="EFG_IV"/>
</dbReference>
<dbReference type="InterPro" id="IPR035649">
    <property type="entry name" value="EFG_V"/>
</dbReference>
<dbReference type="InterPro" id="IPR000640">
    <property type="entry name" value="EFG_V-like"/>
</dbReference>
<dbReference type="InterPro" id="IPR004161">
    <property type="entry name" value="EFTu-like_2"/>
</dbReference>
<dbReference type="InterPro" id="IPR031157">
    <property type="entry name" value="G_TR_CS"/>
</dbReference>
<dbReference type="InterPro" id="IPR027417">
    <property type="entry name" value="P-loop_NTPase"/>
</dbReference>
<dbReference type="InterPro" id="IPR020568">
    <property type="entry name" value="Ribosomal_Su5_D2-typ_SF"/>
</dbReference>
<dbReference type="InterPro" id="IPR014721">
    <property type="entry name" value="Ribsml_uS5_D2-typ_fold_subgr"/>
</dbReference>
<dbReference type="InterPro" id="IPR005225">
    <property type="entry name" value="Small_GTP-bd"/>
</dbReference>
<dbReference type="InterPro" id="IPR000795">
    <property type="entry name" value="T_Tr_GTP-bd_dom"/>
</dbReference>
<dbReference type="InterPro" id="IPR009000">
    <property type="entry name" value="Transl_B-barrel_sf"/>
</dbReference>
<dbReference type="InterPro" id="IPR004540">
    <property type="entry name" value="Transl_elong_EFG/EF2"/>
</dbReference>
<dbReference type="InterPro" id="IPR005517">
    <property type="entry name" value="Transl_elong_EFG/EF2_IV"/>
</dbReference>
<dbReference type="NCBIfam" id="TIGR00484">
    <property type="entry name" value="EF-G"/>
    <property type="match status" value="1"/>
</dbReference>
<dbReference type="NCBIfam" id="NF009381">
    <property type="entry name" value="PRK12740.1-5"/>
    <property type="match status" value="1"/>
</dbReference>
<dbReference type="NCBIfam" id="TIGR00231">
    <property type="entry name" value="small_GTP"/>
    <property type="match status" value="1"/>
</dbReference>
<dbReference type="PANTHER" id="PTHR43636">
    <property type="entry name" value="ELONGATION FACTOR G, MITOCHONDRIAL"/>
    <property type="match status" value="1"/>
</dbReference>
<dbReference type="PANTHER" id="PTHR43636:SF2">
    <property type="entry name" value="ELONGATION FACTOR G, MITOCHONDRIAL"/>
    <property type="match status" value="1"/>
</dbReference>
<dbReference type="Pfam" id="PF00679">
    <property type="entry name" value="EFG_C"/>
    <property type="match status" value="1"/>
</dbReference>
<dbReference type="Pfam" id="PF14492">
    <property type="entry name" value="EFG_III"/>
    <property type="match status" value="1"/>
</dbReference>
<dbReference type="Pfam" id="PF03764">
    <property type="entry name" value="EFG_IV"/>
    <property type="match status" value="1"/>
</dbReference>
<dbReference type="Pfam" id="PF00009">
    <property type="entry name" value="GTP_EFTU"/>
    <property type="match status" value="1"/>
</dbReference>
<dbReference type="Pfam" id="PF03144">
    <property type="entry name" value="GTP_EFTU_D2"/>
    <property type="match status" value="1"/>
</dbReference>
<dbReference type="PRINTS" id="PR00315">
    <property type="entry name" value="ELONGATNFCT"/>
</dbReference>
<dbReference type="SMART" id="SM00838">
    <property type="entry name" value="EFG_C"/>
    <property type="match status" value="1"/>
</dbReference>
<dbReference type="SMART" id="SM00889">
    <property type="entry name" value="EFG_IV"/>
    <property type="match status" value="1"/>
</dbReference>
<dbReference type="SUPFAM" id="SSF54980">
    <property type="entry name" value="EF-G C-terminal domain-like"/>
    <property type="match status" value="2"/>
</dbReference>
<dbReference type="SUPFAM" id="SSF52540">
    <property type="entry name" value="P-loop containing nucleoside triphosphate hydrolases"/>
    <property type="match status" value="1"/>
</dbReference>
<dbReference type="SUPFAM" id="SSF54211">
    <property type="entry name" value="Ribosomal protein S5 domain 2-like"/>
    <property type="match status" value="1"/>
</dbReference>
<dbReference type="SUPFAM" id="SSF50447">
    <property type="entry name" value="Translation proteins"/>
    <property type="match status" value="1"/>
</dbReference>
<dbReference type="PROSITE" id="PS00301">
    <property type="entry name" value="G_TR_1"/>
    <property type="match status" value="1"/>
</dbReference>
<dbReference type="PROSITE" id="PS51722">
    <property type="entry name" value="G_TR_2"/>
    <property type="match status" value="1"/>
</dbReference>
<gene>
    <name evidence="5" type="primary">mEFG1</name>
    <name evidence="3" type="synonym">ico</name>
    <name evidence="5" type="ORF">CG4567</name>
</gene>
<sequence length="745" mass="83509">MSLITRLLTGNNTLRLRALKSLGKAGYSSHAKFSEHKPIERIRNIGISAHIDSGKTTLTERILFYTGRIAEMHEVRGKDNVGATMDSMELERQRGITIQSAATYTLWKDTNINIIDTPGHVDFTVEVERALRVLDGAVLVLCAVGGVQSQTLTVNRQMKRYNVPCLAFINKLDRLGSNPYRVLSQMRSKMNHNAAFIQLPIGVESNCKGIVDLVREKAIYFEGEHGMDIRLDEIPQDMRVESLERRQELIEHLSNADETLGELFLEEKPFTEDDIKAALRRTCINRTFTPVLVGTALKNKGVQPLLDAVLDYLPNPGEVENLGFIEKEGQDPEKVVLNPARDGKDPFVGLAFKLEAGRFGQLTYLRCYQGVLRKGDNIFNARTNKKVRIARLVRLHSNQMEDVNEVYAGDIFALFGVDCASGDTFTTNPKNNLSMESIFVPEPVVSMAIKPNNTKDRDNFSKAIARFTKEDPTFHFFFDNDVKETLVSGMGELHLEIYAQRMEREYGCPVTLGKPKVAFRETLVGPCEFDYLHKKQSGGSGQYARIIGVMEPLPPNQNTLLEFVDETVGTNVPKQFVPGVEKGYREMAEKGMLSGHKLSGIRFRLQDGGHHIVDSSELAFMLAAHGAIKEVFQNGSWQILEPIMLVEVTAPEEFQGAVMGHLSKRHGIITGTEGTEGWFTVYAEVPLNDMFGYAGELRSSTQGKGEFTMEYSRYSPCLPDVQDQIVRQYQESQGLAQPDKKKKKN</sequence>
<proteinExistence type="evidence at transcript level"/>
<protein>
    <recommendedName>
        <fullName evidence="1">Elongation factor G, mitochondrial</fullName>
        <shortName evidence="1">EF-Gmt</shortName>
    </recommendedName>
    <alternativeName>
        <fullName evidence="1">Elongation factor G 1, mitochondrial</fullName>
        <shortName evidence="1">mEF-G 1</shortName>
    </alternativeName>
    <alternativeName>
        <fullName evidence="1">Elongation factor G1</fullName>
        <shortName>dEF-G1</shortName>
    </alternativeName>
    <alternativeName>
        <fullName>Protein iconoclast</fullName>
    </alternativeName>
</protein>
<name>EFGM_DROME</name>
<comment type="function">
    <text evidence="1 2">Mitochondrial GTPase that catalyzes the GTP-dependent ribosomal translocation step during translation elongation. During this step, the ribosome changes from the pre-translocational (PRE) to the post-translocational (POST) state as the newly formed A-site-bound peptidyl-tRNA and P-site-bound deacylated tRNA move to the P and E sites, respectively. Catalyzes the coordinated movement of the two tRNA molecules, the mRNA and conformational changes in the ribosome (By similarity). Essential during development as it acts as a retrograde signal from mitochondria to the nucleus to slow down cell proliferation if mitochondrial energy output is low.</text>
</comment>
<comment type="pathway">
    <text evidence="1">Protein biosynthesis; polypeptide chain elongation.</text>
</comment>
<comment type="subcellular location">
    <subcellularLocation>
        <location evidence="1 2">Mitochondrion</location>
    </subcellularLocation>
</comment>
<comment type="disruption phenotype">
    <text evidence="2">Larvae are able to survive on maternal contribution until the third larval stage but they fail to initiate the rapid growth phase and die.</text>
</comment>
<comment type="miscellaneous">
    <text evidence="1">This protein may be expected to contain an N-terminal transit peptide but none has been predicted.</text>
</comment>
<comment type="similarity">
    <text evidence="4">Belongs to the TRAFAC class translation factor GTPase superfamily. Classic translation factor GTPase family. EF-G/EF-2 subfamily.</text>
</comment>
<comment type="sequence caution" evidence="4">
    <conflict type="frameshift">
        <sequence resource="EMBL-CDS" id="AAZ41771"/>
    </conflict>
</comment>